<accession>P44332</accession>
<evidence type="ECO:0000255" key="1">
    <source>
        <dbReference type="HAMAP-Rule" id="MF_02095"/>
    </source>
</evidence>
<evidence type="ECO:0000305" key="2"/>
<protein>
    <recommendedName>
        <fullName evidence="1">3'(2'),5'-bisphosphate nucleotidase CysQ</fullName>
        <ecNumber evidence="1">3.1.3.7</ecNumber>
    </recommendedName>
    <alternativeName>
        <fullName evidence="1">3'(2'),5-bisphosphonucleoside 3'(2')-phosphohydrolase</fullName>
    </alternativeName>
    <alternativeName>
        <fullName evidence="1">3'-phosphoadenosine 5'-phosphate phosphatase</fullName>
        <shortName evidence="1">PAP phosphatase</shortName>
    </alternativeName>
</protein>
<reference key="1">
    <citation type="journal article" date="1995" name="Science">
        <title>Whole-genome random sequencing and assembly of Haemophilus influenzae Rd.</title>
        <authorList>
            <person name="Fleischmann R.D."/>
            <person name="Adams M.D."/>
            <person name="White O."/>
            <person name="Clayton R.A."/>
            <person name="Kirkness E.F."/>
            <person name="Kerlavage A.R."/>
            <person name="Bult C.J."/>
            <person name="Tomb J.-F."/>
            <person name="Dougherty B.A."/>
            <person name="Merrick J.M."/>
            <person name="McKenney K."/>
            <person name="Sutton G.G."/>
            <person name="FitzHugh W."/>
            <person name="Fields C.A."/>
            <person name="Gocayne J.D."/>
            <person name="Scott J.D."/>
            <person name="Shirley R."/>
            <person name="Liu L.-I."/>
            <person name="Glodek A."/>
            <person name="Kelley J.M."/>
            <person name="Weidman J.F."/>
            <person name="Phillips C.A."/>
            <person name="Spriggs T."/>
            <person name="Hedblom E."/>
            <person name="Cotton M.D."/>
            <person name="Utterback T.R."/>
            <person name="Hanna M.C."/>
            <person name="Nguyen D.T."/>
            <person name="Saudek D.M."/>
            <person name="Brandon R.C."/>
            <person name="Fine L.D."/>
            <person name="Fritchman J.L."/>
            <person name="Fuhrmann J.L."/>
            <person name="Geoghagen N.S.M."/>
            <person name="Gnehm C.L."/>
            <person name="McDonald L.A."/>
            <person name="Small K.V."/>
            <person name="Fraser C.M."/>
            <person name="Smith H.O."/>
            <person name="Venter J.C."/>
        </authorList>
    </citation>
    <scope>NUCLEOTIDE SEQUENCE [LARGE SCALE GENOMIC DNA]</scope>
    <source>
        <strain>ATCC 51907 / DSM 11121 / KW20 / Rd</strain>
    </source>
</reference>
<keyword id="KW-0997">Cell inner membrane</keyword>
<keyword id="KW-1003">Cell membrane</keyword>
<keyword id="KW-0378">Hydrolase</keyword>
<keyword id="KW-0460">Magnesium</keyword>
<keyword id="KW-0472">Membrane</keyword>
<keyword id="KW-0479">Metal-binding</keyword>
<keyword id="KW-1185">Reference proteome</keyword>
<dbReference type="EC" id="3.1.3.7" evidence="1"/>
<dbReference type="EMBL" id="L42023">
    <property type="protein sequence ID" value="AAC22214.1"/>
    <property type="status" value="ALT_FRAME"/>
    <property type="molecule type" value="Genomic_DNA"/>
</dbReference>
<dbReference type="PIR" id="F64077">
    <property type="entry name" value="F64077"/>
</dbReference>
<dbReference type="RefSeq" id="NP_438716.1">
    <property type="nucleotide sequence ID" value="NC_000907.1"/>
</dbReference>
<dbReference type="SMR" id="P44332"/>
<dbReference type="STRING" id="71421.HI_0559"/>
<dbReference type="EnsemblBacteria" id="AAC22214">
    <property type="protein sequence ID" value="AAC22214"/>
    <property type="gene ID" value="HI_0559"/>
</dbReference>
<dbReference type="KEGG" id="hin:HI_0559"/>
<dbReference type="PATRIC" id="fig|71421.8.peg.579"/>
<dbReference type="eggNOG" id="COG1218">
    <property type="taxonomic scope" value="Bacteria"/>
</dbReference>
<dbReference type="HOGENOM" id="CLU_044118_3_0_6"/>
<dbReference type="OrthoDB" id="9785695at2"/>
<dbReference type="Proteomes" id="UP000000579">
    <property type="component" value="Chromosome"/>
</dbReference>
<dbReference type="GO" id="GO:0005886">
    <property type="term" value="C:plasma membrane"/>
    <property type="evidence" value="ECO:0007669"/>
    <property type="project" value="UniProtKB-SubCell"/>
</dbReference>
<dbReference type="GO" id="GO:0008441">
    <property type="term" value="F:3'(2'),5'-bisphosphate nucleotidase activity"/>
    <property type="evidence" value="ECO:0000318"/>
    <property type="project" value="GO_Central"/>
</dbReference>
<dbReference type="GO" id="GO:0000287">
    <property type="term" value="F:magnesium ion binding"/>
    <property type="evidence" value="ECO:0007669"/>
    <property type="project" value="UniProtKB-UniRule"/>
</dbReference>
<dbReference type="GO" id="GO:0050427">
    <property type="term" value="P:3'-phosphoadenosine 5'-phosphosulfate metabolic process"/>
    <property type="evidence" value="ECO:0000318"/>
    <property type="project" value="GO_Central"/>
</dbReference>
<dbReference type="GO" id="GO:0046854">
    <property type="term" value="P:phosphatidylinositol phosphate biosynthetic process"/>
    <property type="evidence" value="ECO:0007669"/>
    <property type="project" value="InterPro"/>
</dbReference>
<dbReference type="GO" id="GO:0000103">
    <property type="term" value="P:sulfate assimilation"/>
    <property type="evidence" value="ECO:0000318"/>
    <property type="project" value="GO_Central"/>
</dbReference>
<dbReference type="CDD" id="cd01638">
    <property type="entry name" value="CysQ"/>
    <property type="match status" value="1"/>
</dbReference>
<dbReference type="FunFam" id="3.30.540.10:FF:000007">
    <property type="entry name" value="3'(2'),5'-bisphosphate nucleotidase CysQ"/>
    <property type="match status" value="1"/>
</dbReference>
<dbReference type="Gene3D" id="3.40.190.80">
    <property type="match status" value="1"/>
</dbReference>
<dbReference type="Gene3D" id="3.30.540.10">
    <property type="entry name" value="Fructose-1,6-Bisphosphatase, subunit A, domain 1"/>
    <property type="match status" value="1"/>
</dbReference>
<dbReference type="HAMAP" id="MF_02095">
    <property type="entry name" value="CysQ"/>
    <property type="match status" value="1"/>
</dbReference>
<dbReference type="InterPro" id="IPR006240">
    <property type="entry name" value="CysQ"/>
</dbReference>
<dbReference type="InterPro" id="IPR050725">
    <property type="entry name" value="CysQ/Inositol_MonoPase"/>
</dbReference>
<dbReference type="InterPro" id="IPR020583">
    <property type="entry name" value="Inositol_monoP_metal-BS"/>
</dbReference>
<dbReference type="InterPro" id="IPR000760">
    <property type="entry name" value="Inositol_monophosphatase-like"/>
</dbReference>
<dbReference type="InterPro" id="IPR020550">
    <property type="entry name" value="Inositol_monophosphatase_CS"/>
</dbReference>
<dbReference type="NCBIfam" id="TIGR01331">
    <property type="entry name" value="bisphos_cysQ"/>
    <property type="match status" value="1"/>
</dbReference>
<dbReference type="PANTHER" id="PTHR43028">
    <property type="entry name" value="3'(2'),5'-BISPHOSPHATE NUCLEOTIDASE 1"/>
    <property type="match status" value="1"/>
</dbReference>
<dbReference type="PANTHER" id="PTHR43028:SF7">
    <property type="entry name" value="3'(2'),5'-BISPHOSPHATE NUCLEOTIDASE CYSQ"/>
    <property type="match status" value="1"/>
</dbReference>
<dbReference type="Pfam" id="PF00459">
    <property type="entry name" value="Inositol_P"/>
    <property type="match status" value="1"/>
</dbReference>
<dbReference type="PRINTS" id="PR00377">
    <property type="entry name" value="IMPHPHTASES"/>
</dbReference>
<dbReference type="SUPFAM" id="SSF56655">
    <property type="entry name" value="Carbohydrate phosphatase"/>
    <property type="match status" value="1"/>
</dbReference>
<dbReference type="PROSITE" id="PS00629">
    <property type="entry name" value="IMP_1"/>
    <property type="match status" value="1"/>
</dbReference>
<dbReference type="PROSITE" id="PS00630">
    <property type="entry name" value="IMP_2"/>
    <property type="match status" value="1"/>
</dbReference>
<organism>
    <name type="scientific">Haemophilus influenzae (strain ATCC 51907 / DSM 11121 / KW20 / Rd)</name>
    <dbReference type="NCBI Taxonomy" id="71421"/>
    <lineage>
        <taxon>Bacteria</taxon>
        <taxon>Pseudomonadati</taxon>
        <taxon>Pseudomonadota</taxon>
        <taxon>Gammaproteobacteria</taxon>
        <taxon>Pasteurellales</taxon>
        <taxon>Pasteurellaceae</taxon>
        <taxon>Haemophilus</taxon>
    </lineage>
</organism>
<proteinExistence type="inferred from homology"/>
<comment type="function">
    <text evidence="1">Converts adenosine-3',5'-bisphosphate (PAP) to AMP.</text>
</comment>
<comment type="catalytic activity">
    <reaction evidence="1">
        <text>adenosine 3',5'-bisphosphate + H2O = AMP + phosphate</text>
        <dbReference type="Rhea" id="RHEA:10040"/>
        <dbReference type="ChEBI" id="CHEBI:15377"/>
        <dbReference type="ChEBI" id="CHEBI:43474"/>
        <dbReference type="ChEBI" id="CHEBI:58343"/>
        <dbReference type="ChEBI" id="CHEBI:456215"/>
        <dbReference type="EC" id="3.1.3.7"/>
    </reaction>
</comment>
<comment type="cofactor">
    <cofactor evidence="1">
        <name>Mg(2+)</name>
        <dbReference type="ChEBI" id="CHEBI:18420"/>
    </cofactor>
</comment>
<comment type="subcellular location">
    <subcellularLocation>
        <location evidence="1">Cell inner membrane</location>
        <topology evidence="1">Peripheral membrane protein</topology>
        <orientation evidence="1">Cytoplasmic side</orientation>
    </subcellularLocation>
</comment>
<comment type="similarity">
    <text evidence="1 2">Belongs to the inositol monophosphatase superfamily. CysQ family.</text>
</comment>
<comment type="sequence caution" evidence="2">
    <conflict type="frameshift">
        <sequence resource="EMBL-CDS" id="AAC22214"/>
    </conflict>
</comment>
<name>CYSQ_HAEIN</name>
<feature type="chain" id="PRO_0000142549" description="3'(2'),5'-bisphosphate nucleotidase CysQ">
    <location>
        <begin position="1"/>
        <end position="269"/>
    </location>
</feature>
<feature type="binding site" evidence="1">
    <location>
        <position position="69"/>
    </location>
    <ligand>
        <name>Mg(2+)</name>
        <dbReference type="ChEBI" id="CHEBI:18420"/>
        <label>1</label>
    </ligand>
</feature>
<feature type="binding site" evidence="1">
    <location>
        <position position="69"/>
    </location>
    <ligand>
        <name>substrate</name>
    </ligand>
</feature>
<feature type="binding site" evidence="1">
    <location>
        <position position="89"/>
    </location>
    <ligand>
        <name>Mg(2+)</name>
        <dbReference type="ChEBI" id="CHEBI:18420"/>
        <label>1</label>
    </ligand>
</feature>
<feature type="binding site" evidence="1">
    <location>
        <position position="89"/>
    </location>
    <ligand>
        <name>Mg(2+)</name>
        <dbReference type="ChEBI" id="CHEBI:18420"/>
        <label>2</label>
    </ligand>
</feature>
<feature type="binding site" evidence="1">
    <location>
        <begin position="91"/>
        <end position="94"/>
    </location>
    <ligand>
        <name>substrate</name>
    </ligand>
</feature>
<feature type="binding site" evidence="1">
    <location>
        <position position="91"/>
    </location>
    <ligand>
        <name>Mg(2+)</name>
        <dbReference type="ChEBI" id="CHEBI:18420"/>
        <label>1</label>
    </ligand>
</feature>
<feature type="binding site" evidence="1">
    <location>
        <position position="92"/>
    </location>
    <ligand>
        <name>Mg(2+)</name>
        <dbReference type="ChEBI" id="CHEBI:18420"/>
        <label>2</label>
    </ligand>
</feature>
<feature type="binding site" evidence="1">
    <location>
        <position position="216"/>
    </location>
    <ligand>
        <name>Mg(2+)</name>
        <dbReference type="ChEBI" id="CHEBI:18420"/>
        <label>2</label>
    </ligand>
</feature>
<feature type="binding site" evidence="1">
    <location>
        <position position="216"/>
    </location>
    <ligand>
        <name>substrate</name>
    </ligand>
</feature>
<gene>
    <name evidence="1" type="primary">cysQ</name>
    <name type="ordered locus">HI_0559</name>
</gene>
<sequence length="269" mass="30723">MLTLNEHLLNQVLLIAYQSGKHLQQFYQKQVHVELKEDNTPVTEADLFVSQFLTEKLTALFPNVPVLSEENCHISFEERKNWKEYWLIDPLDGTQQFINRTDQFSVLITLVRKNKPVLSVIHAPILSTTYYAMCDFGTFKKQLDQVKKLTKNTTNFDRPLRIAVGATTSQEKVRSILPKDFPCEFVVVGSSSLKSGLVAEGAVDCYVRLGQTGEWDTAGAEVLLGETHGAIFDSHFEPLTYNQRETLINPHFVMVGDQSFDWRSIFQFN</sequence>